<name>ISDB_STAAT</name>
<dbReference type="EMBL" id="CP000730">
    <property type="status" value="NOT_ANNOTATED_CDS"/>
    <property type="molecule type" value="Genomic_DNA"/>
</dbReference>
<dbReference type="RefSeq" id="WP_001041586.1">
    <property type="nucleotide sequence ID" value="NC_010079.1"/>
</dbReference>
<dbReference type="BMRB" id="P0C7J5"/>
<dbReference type="SMR" id="P0C7J5"/>
<dbReference type="GO" id="GO:0005576">
    <property type="term" value="C:extracellular region"/>
    <property type="evidence" value="ECO:0007669"/>
    <property type="project" value="UniProtKB-KW"/>
</dbReference>
<dbReference type="GO" id="GO:0015232">
    <property type="term" value="F:heme transmembrane transporter activity"/>
    <property type="evidence" value="ECO:0007669"/>
    <property type="project" value="InterPro"/>
</dbReference>
<dbReference type="GO" id="GO:0046872">
    <property type="term" value="F:metal ion binding"/>
    <property type="evidence" value="ECO:0007669"/>
    <property type="project" value="UniProtKB-KW"/>
</dbReference>
<dbReference type="CDD" id="cd06920">
    <property type="entry name" value="NEAT"/>
    <property type="match status" value="1"/>
</dbReference>
<dbReference type="Gene3D" id="1.20.58.1270">
    <property type="match status" value="1"/>
</dbReference>
<dbReference type="Gene3D" id="2.60.40.1850">
    <property type="match status" value="2"/>
</dbReference>
<dbReference type="InterPro" id="IPR019929">
    <property type="entry name" value="Iron-reg_IsdB"/>
</dbReference>
<dbReference type="InterPro" id="IPR048652">
    <property type="entry name" value="Isd_H_B_linker"/>
</dbReference>
<dbReference type="InterPro" id="IPR050436">
    <property type="entry name" value="IsdA"/>
</dbReference>
<dbReference type="InterPro" id="IPR019931">
    <property type="entry name" value="LPXTG_anchor"/>
</dbReference>
<dbReference type="InterPro" id="IPR006635">
    <property type="entry name" value="NEAT_dom"/>
</dbReference>
<dbReference type="InterPro" id="IPR037250">
    <property type="entry name" value="NEAT_dom_sf"/>
</dbReference>
<dbReference type="InterPro" id="IPR005877">
    <property type="entry name" value="YSIRK_signal_dom"/>
</dbReference>
<dbReference type="NCBIfam" id="TIGR03657">
    <property type="entry name" value="IsdB"/>
    <property type="match status" value="1"/>
</dbReference>
<dbReference type="NCBIfam" id="TIGR01167">
    <property type="entry name" value="LPXTG_anchor"/>
    <property type="match status" value="1"/>
</dbReference>
<dbReference type="NCBIfam" id="TIGR01168">
    <property type="entry name" value="YSIRK_signal"/>
    <property type="match status" value="1"/>
</dbReference>
<dbReference type="PANTHER" id="PTHR37824">
    <property type="entry name" value="IRON-REGULATED SURFACE DETERMINANT PROTEIN C"/>
    <property type="match status" value="1"/>
</dbReference>
<dbReference type="PANTHER" id="PTHR37824:SF1">
    <property type="entry name" value="IRON-REGULATED SURFACE DETERMINANT PROTEIN C"/>
    <property type="match status" value="1"/>
</dbReference>
<dbReference type="Pfam" id="PF00746">
    <property type="entry name" value="Gram_pos_anchor"/>
    <property type="match status" value="1"/>
</dbReference>
<dbReference type="Pfam" id="PF20861">
    <property type="entry name" value="Isd_H_B_linker"/>
    <property type="match status" value="1"/>
</dbReference>
<dbReference type="Pfam" id="PF05031">
    <property type="entry name" value="NEAT"/>
    <property type="match status" value="2"/>
</dbReference>
<dbReference type="Pfam" id="PF04650">
    <property type="entry name" value="YSIRK_signal"/>
    <property type="match status" value="1"/>
</dbReference>
<dbReference type="SMART" id="SM00725">
    <property type="entry name" value="NEAT"/>
    <property type="match status" value="2"/>
</dbReference>
<dbReference type="SUPFAM" id="SSF158911">
    <property type="entry name" value="NEAT domain-like"/>
    <property type="match status" value="2"/>
</dbReference>
<dbReference type="PROSITE" id="PS50847">
    <property type="entry name" value="GRAM_POS_ANCHORING"/>
    <property type="match status" value="1"/>
</dbReference>
<dbReference type="PROSITE" id="PS50978">
    <property type="entry name" value="NEAT"/>
    <property type="match status" value="2"/>
</dbReference>
<gene>
    <name type="primary">isdB</name>
    <name type="synonym">frpB</name>
    <name type="synonym">sasJ</name>
    <name type="synonym">sirH</name>
    <name type="ordered locus">USA300HOU_1063.1</name>
</gene>
<reference key="1">
    <citation type="journal article" date="2007" name="BMC Microbiol.">
        <title>Subtle genetic changes enhance virulence of methicillin resistant and sensitive Staphylococcus aureus.</title>
        <authorList>
            <person name="Highlander S.K."/>
            <person name="Hulten K.G."/>
            <person name="Qin X."/>
            <person name="Jiang H."/>
            <person name="Yerrapragada S."/>
            <person name="Mason E.O. Jr."/>
            <person name="Shang Y."/>
            <person name="Williams T.M."/>
            <person name="Fortunov R.M."/>
            <person name="Liu Y."/>
            <person name="Igboeli O."/>
            <person name="Petrosino J."/>
            <person name="Tirumalai M."/>
            <person name="Uzman A."/>
            <person name="Fox G.E."/>
            <person name="Cardenas A.M."/>
            <person name="Muzny D.M."/>
            <person name="Hemphill L."/>
            <person name="Ding Y."/>
            <person name="Dugan S."/>
            <person name="Blyth P.R."/>
            <person name="Buhay C.J."/>
            <person name="Dinh H.H."/>
            <person name="Hawes A.C."/>
            <person name="Holder M."/>
            <person name="Kovar C.L."/>
            <person name="Lee S.L."/>
            <person name="Liu W."/>
            <person name="Nazareth L.V."/>
            <person name="Wang Q."/>
            <person name="Zhou J."/>
            <person name="Kaplan S.L."/>
            <person name="Weinstock G.M."/>
        </authorList>
    </citation>
    <scope>NUCLEOTIDE SEQUENCE [LARGE SCALE GENOMIC DNA]</scope>
    <source>
        <strain>USA300 / TCH1516</strain>
    </source>
</reference>
<proteinExistence type="inferred from homology"/>
<comment type="function">
    <text evidence="2">Cell wall-anchored surface receptor that extracts heme from oxidized metHb to enable growth on hemoglobin as a sole iron source. Rapidly extracts heme from hemoglobin and transfers it to IsdA or IsdC, which then relays it to the membrane transporter/IsdEF for internalization. Also promotes resistance to hydrogen peroxide and killing by neutrophils.</text>
</comment>
<comment type="subunit">
    <text evidence="2">Interacts with host HBA; this interaction allows heme extraction as iron source. Interacts with IsdA.</text>
</comment>
<comment type="subcellular location">
    <subcellularLocation>
        <location evidence="2">Secreted</location>
        <location evidence="2">Cell wall</location>
        <topology evidence="2">Peptidoglycan-anchor</topology>
    </subcellularLocation>
    <text evidence="2">Anchored to the cell wall by sortase A.</text>
</comment>
<comment type="induction">
    <text evidence="1">Repressed by fur in the presence of iron.</text>
</comment>
<comment type="similarity">
    <text evidence="9">Belongs to the IsdB family.</text>
</comment>
<organism>
    <name type="scientific">Staphylococcus aureus (strain USA300 / TCH1516)</name>
    <dbReference type="NCBI Taxonomy" id="451516"/>
    <lineage>
        <taxon>Bacteria</taxon>
        <taxon>Bacillati</taxon>
        <taxon>Bacillota</taxon>
        <taxon>Bacilli</taxon>
        <taxon>Bacillales</taxon>
        <taxon>Staphylococcaceae</taxon>
        <taxon>Staphylococcus</taxon>
    </lineage>
</organism>
<accession>P0C7J5</accession>
<keyword id="KW-0134">Cell wall</keyword>
<keyword id="KW-0349">Heme</keyword>
<keyword id="KW-0408">Iron</keyword>
<keyword id="KW-0479">Metal-binding</keyword>
<keyword id="KW-0572">Peptidoglycan-anchor</keyword>
<keyword id="KW-0677">Repeat</keyword>
<keyword id="KW-0964">Secreted</keyword>
<keyword id="KW-0732">Signal</keyword>
<keyword id="KW-0843">Virulence</keyword>
<sequence>MNKQQKEFKSFYSIRKSSLGVASVAISTLLLLMSNGEAQAAAEETGGTNTEAQPKTEAVASPTTTSEKAPETKPVANAVSVSNKEVEAPTSETKEAKEVKEVKAPKETKEVKPAAKATNNTYPILNQELREAIKNPAIKDKDHSAPNSRPIDFEMKKKDGTQQFYHYASSVKPARVIFTDSKPEIELGLQSGQFWRKFEVYEGDKKLPIKLVSYDTVKDYAYIRFSVSNGTKAVKIVSSTHFNNKEEKYDYTLMEFAQPIYNSADKFKTEEDYKAEKLLAPYKKAKTLERQVYELNKIQDKLPEKLKAEYKKKLEDTKKALDEQVKSAITEFQNVQPTNEKMTDLQDTKYVVYESVENNESMMDTFVKHPIKTGMLNGKKYMVMETTNDDYWKDFMVEGQRVRTISKDAKNNTRTIIFPYVEGKTLYDAIVKVHVKTIDYDGQYHVRIVDKEAFTKANTDKSNKKEQQDNSAKKEATPATPSKPTPSPVEKESQKQDSQKDDNKQLPSVEKENDASSESGKDKTPATKPTKGEVESSSTTPTKVVSTTQNVAKPTTASSKTTKDVVQTSAGSSEAKDSAPLQKANIKNTNDGHTQSQNNKNTQENKAKSLPQTGEESNKDMTLPLMALLALSSIVAFVLPRKRKN</sequence>
<evidence type="ECO:0000250" key="1"/>
<evidence type="ECO:0000250" key="2">
    <source>
        <dbReference type="UniProtKB" id="A6QG30"/>
    </source>
</evidence>
<evidence type="ECO:0000250" key="3">
    <source>
        <dbReference type="UniProtKB" id="Q2FZF0"/>
    </source>
</evidence>
<evidence type="ECO:0000250" key="4">
    <source>
        <dbReference type="UniProtKB" id="Q7A656"/>
    </source>
</evidence>
<evidence type="ECO:0000255" key="5"/>
<evidence type="ECO:0000255" key="6">
    <source>
        <dbReference type="PROSITE-ProRule" id="PRU00337"/>
    </source>
</evidence>
<evidence type="ECO:0000255" key="7">
    <source>
        <dbReference type="PROSITE-ProRule" id="PRU00477"/>
    </source>
</evidence>
<evidence type="ECO:0000256" key="8">
    <source>
        <dbReference type="SAM" id="MobiDB-lite"/>
    </source>
</evidence>
<evidence type="ECO:0000305" key="9"/>
<protein>
    <recommendedName>
        <fullName>Iron-regulated surface determinant protein B</fullName>
    </recommendedName>
    <alternativeName>
        <fullName>Fur-regulated protein B</fullName>
    </alternativeName>
    <alternativeName>
        <fullName>Staphylococcal iron-regulated protein H</fullName>
    </alternativeName>
    <alternativeName>
        <fullName>Staphylococcus aureus surface protein J</fullName>
    </alternativeName>
</protein>
<feature type="signal peptide" evidence="5">
    <location>
        <begin position="1"/>
        <end position="40"/>
    </location>
</feature>
<feature type="chain" id="PRO_0000333246" description="Iron-regulated surface determinant protein B">
    <location>
        <begin position="41"/>
        <end position="613"/>
    </location>
</feature>
<feature type="propeptide" id="PRO_0000333247" description="Removed by sortase" evidence="7">
    <location>
        <begin position="614"/>
        <end position="645"/>
    </location>
</feature>
<feature type="domain" description="NEAT 1" evidence="6">
    <location>
        <begin position="144"/>
        <end position="269"/>
    </location>
</feature>
<feature type="domain" description="NEAT 2" evidence="6">
    <location>
        <begin position="341"/>
        <end position="458"/>
    </location>
</feature>
<feature type="region of interest" description="Disordered" evidence="8">
    <location>
        <begin position="38"/>
        <end position="113"/>
    </location>
</feature>
<feature type="region of interest" description="Disordered" evidence="8">
    <location>
        <begin position="458"/>
        <end position="619"/>
    </location>
</feature>
<feature type="short sequence motif" description="YSIRK-G/S signaling motif" evidence="3">
    <location>
        <begin position="12"/>
        <end position="23"/>
    </location>
</feature>
<feature type="short sequence motif" description="LPXTG sorting signal" evidence="7">
    <location>
        <begin position="610"/>
        <end position="614"/>
    </location>
</feature>
<feature type="compositionally biased region" description="Low complexity" evidence="8">
    <location>
        <begin position="38"/>
        <end position="53"/>
    </location>
</feature>
<feature type="compositionally biased region" description="Basic and acidic residues" evidence="8">
    <location>
        <begin position="84"/>
        <end position="113"/>
    </location>
</feature>
<feature type="compositionally biased region" description="Basic and acidic residues" evidence="8">
    <location>
        <begin position="458"/>
        <end position="476"/>
    </location>
</feature>
<feature type="compositionally biased region" description="Basic and acidic residues" evidence="8">
    <location>
        <begin position="489"/>
        <end position="534"/>
    </location>
</feature>
<feature type="compositionally biased region" description="Low complexity" evidence="8">
    <location>
        <begin position="535"/>
        <end position="560"/>
    </location>
</feature>
<feature type="compositionally biased region" description="Polar residues" evidence="8">
    <location>
        <begin position="585"/>
        <end position="615"/>
    </location>
</feature>
<feature type="binding site" description="axial binding residue" evidence="4">
    <location>
        <position position="362"/>
    </location>
    <ligand>
        <name>heme</name>
        <dbReference type="ChEBI" id="CHEBI:30413"/>
    </ligand>
    <ligandPart>
        <name>Fe</name>
        <dbReference type="ChEBI" id="CHEBI:18248"/>
    </ligandPart>
</feature>
<feature type="binding site" description="axial binding residue" evidence="4">
    <location>
        <position position="440"/>
    </location>
    <ligand>
        <name>heme</name>
        <dbReference type="ChEBI" id="CHEBI:30413"/>
    </ligand>
    <ligandPart>
        <name>Fe</name>
        <dbReference type="ChEBI" id="CHEBI:18248"/>
    </ligandPart>
</feature>
<feature type="modified residue" description="Pentaglycyl murein peptidoglycan amidated threonine" evidence="7">
    <location>
        <position position="613"/>
    </location>
</feature>